<sequence length="664" mass="75236">MPLRDKYCQTDHHHHGCCEPVYILEPGDPPLLQQPLQTSKSGIQQIIECFRSGTKQLKHILLKDVDTIFECKLCRSLFRGLPNLITHKKFYCPPSLQMDDNLPDVNDKQSQAINDLLEAIYPSVDKREYIIKLEPIETNQNAVFQYISRTDNPIEVTESSSTPEQTEVQIQETSTEQSKTVPVTDTEVETVEPPPVEIVTDEVAPTSDEQPQESQADLETSDNSDFGHQLICCLCRKEFNSRRGVRRHIRKVHKKKMEELKKYIETRKNPNQSSKGRSKNVLVPLSRSCPVCCKSFATKANVRRHFDEVHRGLRRDSITPDIATKPGQPLFLDSISPKKSFKTRKQKSSSKAEYNLTACKCLLCKRKYSSQIMLKRHMQIVHKITLSGTNSKREKGPNNTANSSEIKVKVEPADSVESSPPSITHSPQNELKGTNHSNEKKNTPAAQKNKVKQDSESPKSTSPSAAGGQQKTRKPKLSAGFDFKQLYCKLCKRQFTSKQNLTKHIELHTDGNNIYVKFYKCPLCTYETRRKRDVIRHITVVHKKSSRYLGKITASLEIRAIKKPIDFVLNKVAKRGPSRDEAKHSDSKHDGTSNSPSKKYEVADVGIEVKVTKNFSLHRCNKCGKAFAKKTYLEHHKKTHKANASNSPEGNKTKGRSTRSKALV</sequence>
<proteinExistence type="evidence at protein level"/>
<dbReference type="EMBL" id="CH471070">
    <property type="protein sequence ID" value="EAW83626.1"/>
    <property type="molecule type" value="Genomic_DNA"/>
</dbReference>
<dbReference type="EMBL" id="BC110623">
    <property type="protein sequence ID" value="AAI10624.1"/>
    <property type="molecule type" value="mRNA"/>
</dbReference>
<dbReference type="EMBL" id="BC110624">
    <property type="protein sequence ID" value="AAI10625.1"/>
    <property type="molecule type" value="mRNA"/>
</dbReference>
<dbReference type="EMBL" id="AF218032">
    <property type="protein sequence ID" value="AAG17274.1"/>
    <property type="status" value="ALT_SEQ"/>
    <property type="molecule type" value="mRNA"/>
</dbReference>
<dbReference type="CCDS" id="CCDS5795.1"/>
<dbReference type="RefSeq" id="NP_789784.2">
    <property type="nucleotide sequence ID" value="NM_176814.4"/>
</dbReference>
<dbReference type="RefSeq" id="XP_005250238.1">
    <property type="nucleotide sequence ID" value="XM_005250181.5"/>
</dbReference>
<dbReference type="RefSeq" id="XP_047275899.1">
    <property type="nucleotide sequence ID" value="XM_047419943.1"/>
</dbReference>
<dbReference type="RefSeq" id="XP_047275900.1">
    <property type="nucleotide sequence ID" value="XM_047419944.1"/>
</dbReference>
<dbReference type="RefSeq" id="XP_054213381.1">
    <property type="nucleotide sequence ID" value="XM_054357406.1"/>
</dbReference>
<dbReference type="RefSeq" id="XP_054213382.1">
    <property type="nucleotide sequence ID" value="XM_054357407.1"/>
</dbReference>
<dbReference type="RefSeq" id="XP_054213383.1">
    <property type="nucleotide sequence ID" value="XM_054357408.1"/>
</dbReference>
<dbReference type="BioGRID" id="127973">
    <property type="interactions" value="48"/>
</dbReference>
<dbReference type="FunCoup" id="Q2TB10">
    <property type="interactions" value="2334"/>
</dbReference>
<dbReference type="IntAct" id="Q2TB10">
    <property type="interactions" value="348"/>
</dbReference>
<dbReference type="MINT" id="Q2TB10"/>
<dbReference type="STRING" id="9606.ENSP00000265827"/>
<dbReference type="GlyGen" id="Q2TB10">
    <property type="glycosylation" value="1 site, 1 O-linked glycan (1 site)"/>
</dbReference>
<dbReference type="iPTMnet" id="Q2TB10"/>
<dbReference type="PhosphoSitePlus" id="Q2TB10"/>
<dbReference type="SwissPalm" id="Q2TB10"/>
<dbReference type="BioMuta" id="ZNF800"/>
<dbReference type="DMDM" id="121941799"/>
<dbReference type="jPOST" id="Q2TB10"/>
<dbReference type="MassIVE" id="Q2TB10"/>
<dbReference type="PaxDb" id="9606-ENSP00000376989"/>
<dbReference type="PeptideAtlas" id="Q2TB10"/>
<dbReference type="ProteomicsDB" id="61479"/>
<dbReference type="Pumba" id="Q2TB10"/>
<dbReference type="Antibodypedia" id="17720">
    <property type="antibodies" value="73 antibodies from 17 providers"/>
</dbReference>
<dbReference type="DNASU" id="168850"/>
<dbReference type="Ensembl" id="ENST00000265827.8">
    <property type="protein sequence ID" value="ENSP00000265827.3"/>
    <property type="gene ID" value="ENSG00000048405.11"/>
</dbReference>
<dbReference type="Ensembl" id="ENST00000393312.5">
    <property type="protein sequence ID" value="ENSP00000376988.1"/>
    <property type="gene ID" value="ENSG00000048405.11"/>
</dbReference>
<dbReference type="Ensembl" id="ENST00000393313.5">
    <property type="protein sequence ID" value="ENSP00000376989.1"/>
    <property type="gene ID" value="ENSG00000048405.11"/>
</dbReference>
<dbReference type="GeneID" id="168850"/>
<dbReference type="KEGG" id="hsa:168850"/>
<dbReference type="MANE-Select" id="ENST00000265827.8">
    <property type="protein sequence ID" value="ENSP00000265827.3"/>
    <property type="RefSeq nucleotide sequence ID" value="NM_176814.5"/>
    <property type="RefSeq protein sequence ID" value="NP_789784.2"/>
</dbReference>
<dbReference type="UCSC" id="uc003vly.2">
    <property type="organism name" value="human"/>
</dbReference>
<dbReference type="AGR" id="HGNC:27267"/>
<dbReference type="CTD" id="168850"/>
<dbReference type="DisGeNET" id="168850"/>
<dbReference type="GeneCards" id="ZNF800"/>
<dbReference type="HGNC" id="HGNC:27267">
    <property type="gene designation" value="ZNF800"/>
</dbReference>
<dbReference type="HPA" id="ENSG00000048405">
    <property type="expression patterns" value="Tissue enhanced (bone)"/>
</dbReference>
<dbReference type="MIM" id="621007">
    <property type="type" value="gene"/>
</dbReference>
<dbReference type="neXtProt" id="NX_Q2TB10"/>
<dbReference type="OpenTargets" id="ENSG00000048405"/>
<dbReference type="PharmGKB" id="PA162410582"/>
<dbReference type="VEuPathDB" id="HostDB:ENSG00000048405"/>
<dbReference type="eggNOG" id="KOG1721">
    <property type="taxonomic scope" value="Eukaryota"/>
</dbReference>
<dbReference type="GeneTree" id="ENSGT00390000008140"/>
<dbReference type="HOGENOM" id="CLU_015050_0_0_1"/>
<dbReference type="InParanoid" id="Q2TB10"/>
<dbReference type="OMA" id="SSCICHE"/>
<dbReference type="OrthoDB" id="10066279at2759"/>
<dbReference type="PAN-GO" id="Q2TB10">
    <property type="GO annotations" value="0 GO annotations based on evolutionary models"/>
</dbReference>
<dbReference type="PhylomeDB" id="Q2TB10"/>
<dbReference type="TreeFam" id="TF333197"/>
<dbReference type="PathwayCommons" id="Q2TB10"/>
<dbReference type="SignaLink" id="Q2TB10"/>
<dbReference type="BioGRID-ORCS" id="168850">
    <property type="hits" value="21 hits in 1192 CRISPR screens"/>
</dbReference>
<dbReference type="CD-CODE" id="91857CE7">
    <property type="entry name" value="Nucleolus"/>
</dbReference>
<dbReference type="ChiTaRS" id="ZNF800">
    <property type="organism name" value="human"/>
</dbReference>
<dbReference type="GenomeRNAi" id="168850"/>
<dbReference type="Pharos" id="Q2TB10">
    <property type="development level" value="Tdark"/>
</dbReference>
<dbReference type="PRO" id="PR:Q2TB10"/>
<dbReference type="Proteomes" id="UP000005640">
    <property type="component" value="Chromosome 7"/>
</dbReference>
<dbReference type="RNAct" id="Q2TB10">
    <property type="molecule type" value="protein"/>
</dbReference>
<dbReference type="Bgee" id="ENSG00000048405">
    <property type="expression patterns" value="Expressed in bone marrow cell and 164 other cell types or tissues"/>
</dbReference>
<dbReference type="ExpressionAtlas" id="Q2TB10">
    <property type="expression patterns" value="baseline and differential"/>
</dbReference>
<dbReference type="GO" id="GO:0005634">
    <property type="term" value="C:nucleus"/>
    <property type="evidence" value="ECO:0007669"/>
    <property type="project" value="UniProtKB-SubCell"/>
</dbReference>
<dbReference type="GO" id="GO:0003677">
    <property type="term" value="F:DNA binding"/>
    <property type="evidence" value="ECO:0007669"/>
    <property type="project" value="UniProtKB-KW"/>
</dbReference>
<dbReference type="GO" id="GO:0003700">
    <property type="term" value="F:DNA-binding transcription factor activity"/>
    <property type="evidence" value="ECO:0000303"/>
    <property type="project" value="ARUK-UCL"/>
</dbReference>
<dbReference type="GO" id="GO:0008270">
    <property type="term" value="F:zinc ion binding"/>
    <property type="evidence" value="ECO:0007669"/>
    <property type="project" value="UniProtKB-KW"/>
</dbReference>
<dbReference type="GO" id="GO:0090425">
    <property type="term" value="P:acinar cell differentiation"/>
    <property type="evidence" value="ECO:0007669"/>
    <property type="project" value="Ensembl"/>
</dbReference>
<dbReference type="GO" id="GO:0031018">
    <property type="term" value="P:endocrine pancreas development"/>
    <property type="evidence" value="ECO:0007669"/>
    <property type="project" value="Ensembl"/>
</dbReference>
<dbReference type="Gene3D" id="3.30.160.60">
    <property type="entry name" value="Classic Zinc Finger"/>
    <property type="match status" value="3"/>
</dbReference>
<dbReference type="InterPro" id="IPR041697">
    <property type="entry name" value="Znf-C2H2_11"/>
</dbReference>
<dbReference type="InterPro" id="IPR039149">
    <property type="entry name" value="ZNF800"/>
</dbReference>
<dbReference type="InterPro" id="IPR036236">
    <property type="entry name" value="Znf_C2H2_sf"/>
</dbReference>
<dbReference type="InterPro" id="IPR013087">
    <property type="entry name" value="Znf_C2H2_type"/>
</dbReference>
<dbReference type="PANTHER" id="PTHR21020">
    <property type="entry name" value="ZINC FINGER PROTEIN 800"/>
    <property type="match status" value="1"/>
</dbReference>
<dbReference type="PANTHER" id="PTHR21020:SF0">
    <property type="entry name" value="ZINC FINGER PROTEIN 800"/>
    <property type="match status" value="1"/>
</dbReference>
<dbReference type="Pfam" id="PF25445">
    <property type="entry name" value="CCHC_ZFPM2"/>
    <property type="match status" value="1"/>
</dbReference>
<dbReference type="Pfam" id="PF00096">
    <property type="entry name" value="zf-C2H2"/>
    <property type="match status" value="2"/>
</dbReference>
<dbReference type="Pfam" id="PF16622">
    <property type="entry name" value="zf-C2H2_11"/>
    <property type="match status" value="1"/>
</dbReference>
<dbReference type="Pfam" id="PF16624">
    <property type="entry name" value="zf-C2H2_assoc2"/>
    <property type="match status" value="1"/>
</dbReference>
<dbReference type="SMART" id="SM00355">
    <property type="entry name" value="ZnF_C2H2"/>
    <property type="match status" value="7"/>
</dbReference>
<dbReference type="SUPFAM" id="SSF57667">
    <property type="entry name" value="beta-beta-alpha zinc fingers"/>
    <property type="match status" value="3"/>
</dbReference>
<dbReference type="PROSITE" id="PS00028">
    <property type="entry name" value="ZINC_FINGER_C2H2_1"/>
    <property type="match status" value="5"/>
</dbReference>
<dbReference type="PROSITE" id="PS50157">
    <property type="entry name" value="ZINC_FINGER_C2H2_2"/>
    <property type="match status" value="4"/>
</dbReference>
<gene>
    <name type="primary">ZNF800</name>
    <name type="ORF">PP902</name>
</gene>
<accession>Q2TB10</accession>
<accession>Q9HBN0</accession>
<keyword id="KW-0238">DNA-binding</keyword>
<keyword id="KW-1017">Isopeptide bond</keyword>
<keyword id="KW-0479">Metal-binding</keyword>
<keyword id="KW-0539">Nucleus</keyword>
<keyword id="KW-0597">Phosphoprotein</keyword>
<keyword id="KW-1267">Proteomics identification</keyword>
<keyword id="KW-1185">Reference proteome</keyword>
<keyword id="KW-0677">Repeat</keyword>
<keyword id="KW-0804">Transcription</keyword>
<keyword id="KW-0805">Transcription regulation</keyword>
<keyword id="KW-0832">Ubl conjugation</keyword>
<keyword id="KW-0862">Zinc</keyword>
<keyword id="KW-0863">Zinc-finger</keyword>
<feature type="chain" id="PRO_0000304410" description="Zinc finger protein 800">
    <location>
        <begin position="1"/>
        <end position="664"/>
    </location>
</feature>
<feature type="zinc finger region" description="C2H2-type 1; degenerate" evidence="2">
    <location>
        <begin position="69"/>
        <end position="91"/>
    </location>
</feature>
<feature type="zinc finger region" description="C2H2-type 2" evidence="2">
    <location>
        <begin position="230"/>
        <end position="253"/>
    </location>
</feature>
<feature type="zinc finger region" description="C2H2-type 3" evidence="2">
    <location>
        <begin position="287"/>
        <end position="310"/>
    </location>
</feature>
<feature type="zinc finger region" description="C2H2-type 4" evidence="2">
    <location>
        <begin position="357"/>
        <end position="382"/>
    </location>
</feature>
<feature type="zinc finger region" description="C2H2-type 5" evidence="2">
    <location>
        <begin position="486"/>
        <end position="508"/>
    </location>
</feature>
<feature type="zinc finger region" description="C2H2-type 6" evidence="2">
    <location>
        <begin position="519"/>
        <end position="542"/>
    </location>
</feature>
<feature type="zinc finger region" description="C2H2-type 7" evidence="2">
    <location>
        <begin position="618"/>
        <end position="640"/>
    </location>
</feature>
<feature type="region of interest" description="Disordered" evidence="3">
    <location>
        <begin position="154"/>
        <end position="224"/>
    </location>
</feature>
<feature type="region of interest" description="Disordered" evidence="3">
    <location>
        <begin position="328"/>
        <end position="349"/>
    </location>
</feature>
<feature type="region of interest" description="Disordered" evidence="3">
    <location>
        <begin position="388"/>
        <end position="476"/>
    </location>
</feature>
<feature type="region of interest" description="Disordered" evidence="3">
    <location>
        <begin position="574"/>
        <end position="599"/>
    </location>
</feature>
<feature type="region of interest" description="Disordered" evidence="3">
    <location>
        <begin position="635"/>
        <end position="664"/>
    </location>
</feature>
<feature type="compositionally biased region" description="Polar residues" evidence="3">
    <location>
        <begin position="154"/>
        <end position="179"/>
    </location>
</feature>
<feature type="compositionally biased region" description="Polar residues" evidence="3">
    <location>
        <begin position="207"/>
        <end position="224"/>
    </location>
</feature>
<feature type="compositionally biased region" description="Basic residues" evidence="3">
    <location>
        <begin position="339"/>
        <end position="348"/>
    </location>
</feature>
<feature type="compositionally biased region" description="Polar residues" evidence="3">
    <location>
        <begin position="416"/>
        <end position="436"/>
    </location>
</feature>
<feature type="compositionally biased region" description="Polar residues" evidence="3">
    <location>
        <begin position="458"/>
        <end position="470"/>
    </location>
</feature>
<feature type="compositionally biased region" description="Basic and acidic residues" evidence="3">
    <location>
        <begin position="577"/>
        <end position="591"/>
    </location>
</feature>
<feature type="compositionally biased region" description="Basic residues" evidence="3">
    <location>
        <begin position="653"/>
        <end position="664"/>
    </location>
</feature>
<feature type="modified residue" description="Phosphoserine" evidence="5">
    <location>
        <position position="317"/>
    </location>
</feature>
<feature type="modified residue" description="Phosphothreonine" evidence="5 7">
    <location>
        <position position="319"/>
    </location>
</feature>
<feature type="modified residue" description="Phosphoserine" evidence="5">
    <location>
        <position position="336"/>
    </location>
</feature>
<feature type="modified residue" description="Phosphoserine" evidence="1">
    <location>
        <position position="422"/>
    </location>
</feature>
<feature type="modified residue" description="Phosphoserine" evidence="6">
    <location>
        <position position="426"/>
    </location>
</feature>
<feature type="modified residue" description="Phosphoserine" evidence="5">
    <location>
        <position position="455"/>
    </location>
</feature>
<feature type="modified residue" description="Phosphoserine" evidence="5">
    <location>
        <position position="457"/>
    </location>
</feature>
<feature type="modified residue" description="Phosphoserine" evidence="1">
    <location>
        <position position="460"/>
    </location>
</feature>
<feature type="modified residue" description="Phosphoserine" evidence="1">
    <location>
        <position position="462"/>
    </location>
</feature>
<feature type="cross-link" description="Glycyl lysine isopeptide (Lys-Gly) (interchain with G-Cter in SUMO2)" evidence="8 9 10 11 12">
    <location>
        <position position="132"/>
    </location>
</feature>
<feature type="cross-link" description="Glycyl lysine isopeptide (Lys-Gly) (interchain with G-Cter in SUMO2)" evidence="12">
    <location>
        <position position="279"/>
    </location>
</feature>
<feature type="cross-link" description="Glycyl lysine isopeptide (Lys-Gly) (interchain with G-Cter in SUMO2)" evidence="12">
    <location>
        <position position="392"/>
    </location>
</feature>
<feature type="cross-link" description="Glycyl lysine isopeptide (Lys-Gly) (interchain with G-Cter in SUMO1); alternate" evidence="8">
    <location>
        <position position="409"/>
    </location>
</feature>
<feature type="cross-link" description="Glycyl lysine isopeptide (Lys-Gly) (interchain with G-Cter in SUMO2); alternate" evidence="8 9 10 11 12">
    <location>
        <position position="409"/>
    </location>
</feature>
<feature type="cross-link" description="Glycyl lysine isopeptide (Lys-Gly) (interchain with G-Cter in SUMO2)" evidence="12">
    <location>
        <position position="476"/>
    </location>
</feature>
<feature type="cross-link" description="Glycyl lysine isopeptide (Lys-Gly) (interchain with G-Cter in SUMO2)" evidence="12">
    <location>
        <position position="599"/>
    </location>
</feature>
<feature type="sequence variant" id="VAR_052904" description="In dbSNP:rs17865569.">
    <original>L</original>
    <variation>V</variation>
    <location>
        <position position="102"/>
    </location>
</feature>
<name>ZN800_HUMAN</name>
<reference key="1">
    <citation type="submission" date="2005-07" db="EMBL/GenBank/DDBJ databases">
        <authorList>
            <person name="Mural R.J."/>
            <person name="Istrail S."/>
            <person name="Sutton G.G."/>
            <person name="Florea L."/>
            <person name="Halpern A.L."/>
            <person name="Mobarry C.M."/>
            <person name="Lippert R."/>
            <person name="Walenz B."/>
            <person name="Shatkay H."/>
            <person name="Dew I."/>
            <person name="Miller J.R."/>
            <person name="Flanigan M.J."/>
            <person name="Edwards N.J."/>
            <person name="Bolanos R."/>
            <person name="Fasulo D."/>
            <person name="Halldorsson B.V."/>
            <person name="Hannenhalli S."/>
            <person name="Turner R."/>
            <person name="Yooseph S."/>
            <person name="Lu F."/>
            <person name="Nusskern D.R."/>
            <person name="Shue B.C."/>
            <person name="Zheng X.H."/>
            <person name="Zhong F."/>
            <person name="Delcher A.L."/>
            <person name="Huson D.H."/>
            <person name="Kravitz S.A."/>
            <person name="Mouchard L."/>
            <person name="Reinert K."/>
            <person name="Remington K.A."/>
            <person name="Clark A.G."/>
            <person name="Waterman M.S."/>
            <person name="Eichler E.E."/>
            <person name="Adams M.D."/>
            <person name="Hunkapiller M.W."/>
            <person name="Myers E.W."/>
            <person name="Venter J.C."/>
        </authorList>
    </citation>
    <scope>NUCLEOTIDE SEQUENCE [LARGE SCALE GENOMIC DNA]</scope>
</reference>
<reference key="2">
    <citation type="journal article" date="2004" name="Genome Res.">
        <title>The status, quality, and expansion of the NIH full-length cDNA project: the Mammalian Gene Collection (MGC).</title>
        <authorList>
            <consortium name="The MGC Project Team"/>
        </authorList>
    </citation>
    <scope>NUCLEOTIDE SEQUENCE [LARGE SCALE MRNA]</scope>
</reference>
<reference key="3">
    <citation type="journal article" date="2004" name="Proc. Natl. Acad. Sci. U.S.A.">
        <title>Large-scale cDNA transfection screening for genes related to cancer development and progression.</title>
        <authorList>
            <person name="Wan D."/>
            <person name="Gong Y."/>
            <person name="Qin W."/>
            <person name="Zhang P."/>
            <person name="Li J."/>
            <person name="Wei L."/>
            <person name="Zhou X."/>
            <person name="Li H."/>
            <person name="Qiu X."/>
            <person name="Zhong F."/>
            <person name="He L."/>
            <person name="Yu J."/>
            <person name="Yao G."/>
            <person name="Jiang H."/>
            <person name="Qian L."/>
            <person name="Yu Y."/>
            <person name="Shu H."/>
            <person name="Chen X."/>
            <person name="Xu H."/>
            <person name="Guo M."/>
            <person name="Pan Z."/>
            <person name="Chen Y."/>
            <person name="Ge C."/>
            <person name="Yang S."/>
            <person name="Gu J."/>
        </authorList>
    </citation>
    <scope>NUCLEOTIDE SEQUENCE [LARGE SCALE MRNA] OF 1-471</scope>
</reference>
<reference key="4">
    <citation type="journal article" date="2008" name="Proc. Natl. Acad. Sci. U.S.A.">
        <title>A quantitative atlas of mitotic phosphorylation.</title>
        <authorList>
            <person name="Dephoure N."/>
            <person name="Zhou C."/>
            <person name="Villen J."/>
            <person name="Beausoleil S.A."/>
            <person name="Bakalarski C.E."/>
            <person name="Elledge S.J."/>
            <person name="Gygi S.P."/>
        </authorList>
    </citation>
    <scope>PHOSPHORYLATION [LARGE SCALE ANALYSIS] AT SER-317; THR-319; SER-336; SER-455 AND SER-457</scope>
    <scope>IDENTIFICATION BY MASS SPECTROMETRY [LARGE SCALE ANALYSIS]</scope>
    <source>
        <tissue>Cervix carcinoma</tissue>
    </source>
</reference>
<reference key="5">
    <citation type="journal article" date="2010" name="Sci. Signal.">
        <title>Quantitative phosphoproteomics reveals widespread full phosphorylation site occupancy during mitosis.</title>
        <authorList>
            <person name="Olsen J.V."/>
            <person name="Vermeulen M."/>
            <person name="Santamaria A."/>
            <person name="Kumar C."/>
            <person name="Miller M.L."/>
            <person name="Jensen L.J."/>
            <person name="Gnad F."/>
            <person name="Cox J."/>
            <person name="Jensen T.S."/>
            <person name="Nigg E.A."/>
            <person name="Brunak S."/>
            <person name="Mann M."/>
        </authorList>
    </citation>
    <scope>IDENTIFICATION BY MASS SPECTROMETRY [LARGE SCALE ANALYSIS]</scope>
    <source>
        <tissue>Cervix carcinoma</tissue>
    </source>
</reference>
<reference key="6">
    <citation type="journal article" date="2013" name="J. Proteome Res.">
        <title>Toward a comprehensive characterization of a human cancer cell phosphoproteome.</title>
        <authorList>
            <person name="Zhou H."/>
            <person name="Di Palma S."/>
            <person name="Preisinger C."/>
            <person name="Peng M."/>
            <person name="Polat A.N."/>
            <person name="Heck A.J."/>
            <person name="Mohammed S."/>
        </authorList>
    </citation>
    <scope>PHOSPHORYLATION [LARGE SCALE ANALYSIS] AT SER-426</scope>
    <scope>IDENTIFICATION BY MASS SPECTROMETRY [LARGE SCALE ANALYSIS]</scope>
    <source>
        <tissue>Erythroleukemia</tissue>
    </source>
</reference>
<reference key="7">
    <citation type="journal article" date="2014" name="J. Proteomics">
        <title>An enzyme assisted RP-RPLC approach for in-depth analysis of human liver phosphoproteome.</title>
        <authorList>
            <person name="Bian Y."/>
            <person name="Song C."/>
            <person name="Cheng K."/>
            <person name="Dong M."/>
            <person name="Wang F."/>
            <person name="Huang J."/>
            <person name="Sun D."/>
            <person name="Wang L."/>
            <person name="Ye M."/>
            <person name="Zou H."/>
        </authorList>
    </citation>
    <scope>PHOSPHORYLATION [LARGE SCALE ANALYSIS] AT THR-319</scope>
    <scope>IDENTIFICATION BY MASS SPECTROMETRY [LARGE SCALE ANALYSIS]</scope>
    <source>
        <tissue>Liver</tissue>
    </source>
</reference>
<reference key="8">
    <citation type="journal article" date="2014" name="Nat. Struct. Mol. Biol.">
        <title>Uncovering global SUMOylation signaling networks in a site-specific manner.</title>
        <authorList>
            <person name="Hendriks I.A."/>
            <person name="D'Souza R.C."/>
            <person name="Yang B."/>
            <person name="Verlaan-de Vries M."/>
            <person name="Mann M."/>
            <person name="Vertegaal A.C."/>
        </authorList>
    </citation>
    <scope>SUMOYLATION [LARGE SCALE ANALYSIS] AT LYS-132 AND LYS-409</scope>
    <scope>IDENTIFICATION BY MASS SPECTROMETRY [LARGE SCALE ANALYSIS]</scope>
</reference>
<reference key="9">
    <citation type="journal article" date="2014" name="Proc. Natl. Acad. Sci. U.S.A.">
        <title>Mapping of SUMO sites and analysis of SUMOylation changes induced by external stimuli.</title>
        <authorList>
            <person name="Impens F."/>
            <person name="Radoshevich L."/>
            <person name="Cossart P."/>
            <person name="Ribet D."/>
        </authorList>
    </citation>
    <scope>SUMOYLATION [LARGE SCALE ANALYSIS] AT LYS-132 AND LYS-409</scope>
    <scope>IDENTIFICATION BY MASS SPECTROMETRY [LARGE SCALE ANALYSIS]</scope>
</reference>
<reference key="10">
    <citation type="journal article" date="2015" name="Cell Rep.">
        <title>SUMO-2 orchestrates chromatin modifiers in response to DNA damage.</title>
        <authorList>
            <person name="Hendriks I.A."/>
            <person name="Treffers L.W."/>
            <person name="Verlaan-de Vries M."/>
            <person name="Olsen J.V."/>
            <person name="Vertegaal A.C."/>
        </authorList>
    </citation>
    <scope>SUMOYLATION [LARGE SCALE ANALYSIS] AT LYS-132 AND LYS-409</scope>
    <scope>IDENTIFICATION BY MASS SPECTROMETRY [LARGE SCALE ANALYSIS]</scope>
</reference>
<reference key="11">
    <citation type="journal article" date="2015" name="Mol. Cell. Proteomics">
        <title>System-wide analysis of SUMOylation dynamics in response to replication stress reveals novel small ubiquitin-like modified target proteins and acceptor lysines relevant for genome stability.</title>
        <authorList>
            <person name="Xiao Z."/>
            <person name="Chang J.G."/>
            <person name="Hendriks I.A."/>
            <person name="Sigurdsson J.O."/>
            <person name="Olsen J.V."/>
            <person name="Vertegaal A.C."/>
        </authorList>
    </citation>
    <scope>SUMOYLATION [LARGE SCALE ANALYSIS] AT LYS-132 AND LYS-409</scope>
    <scope>IDENTIFICATION BY MASS SPECTROMETRY [LARGE SCALE ANALYSIS]</scope>
</reference>
<reference key="12">
    <citation type="journal article" date="2017" name="Nat. Struct. Mol. Biol.">
        <title>Site-specific mapping of the human SUMO proteome reveals co-modification with phosphorylation.</title>
        <authorList>
            <person name="Hendriks I.A."/>
            <person name="Lyon D."/>
            <person name="Young C."/>
            <person name="Jensen L.J."/>
            <person name="Vertegaal A.C."/>
            <person name="Nielsen M.L."/>
        </authorList>
    </citation>
    <scope>SUMOYLATION [LARGE SCALE ANALYSIS] AT LYS-132; LYS-279; LYS-392; LYS-409; LYS-476 AND LYS-599</scope>
    <scope>IDENTIFICATION BY MASS SPECTROMETRY [LARGE SCALE ANALYSIS]</scope>
</reference>
<comment type="function">
    <text>May be involved in transcriptional regulation.</text>
</comment>
<comment type="subcellular location">
    <subcellularLocation>
        <location evidence="4">Nucleus</location>
    </subcellularLocation>
</comment>
<comment type="similarity">
    <text evidence="4">Belongs to the krueppel C2H2-type zinc-finger protein family.</text>
</comment>
<comment type="sequence caution" evidence="4">
    <conflict type="frameshift">
        <sequence resource="EMBL-CDS" id="AAG17274"/>
    </conflict>
</comment>
<comment type="sequence caution" evidence="4">
    <conflict type="miscellaneous discrepancy">
        <sequence resource="EMBL-CDS" id="AAG17274"/>
    </conflict>
    <text>Contaminating sequence. Potential poly-A sequence.</text>
</comment>
<protein>
    <recommendedName>
        <fullName>Zinc finger protein 800</fullName>
    </recommendedName>
</protein>
<organism>
    <name type="scientific">Homo sapiens</name>
    <name type="common">Human</name>
    <dbReference type="NCBI Taxonomy" id="9606"/>
    <lineage>
        <taxon>Eukaryota</taxon>
        <taxon>Metazoa</taxon>
        <taxon>Chordata</taxon>
        <taxon>Craniata</taxon>
        <taxon>Vertebrata</taxon>
        <taxon>Euteleostomi</taxon>
        <taxon>Mammalia</taxon>
        <taxon>Eutheria</taxon>
        <taxon>Euarchontoglires</taxon>
        <taxon>Primates</taxon>
        <taxon>Haplorrhini</taxon>
        <taxon>Catarrhini</taxon>
        <taxon>Hominidae</taxon>
        <taxon>Homo</taxon>
    </lineage>
</organism>
<evidence type="ECO:0000250" key="1">
    <source>
        <dbReference type="UniProtKB" id="Q0VEE6"/>
    </source>
</evidence>
<evidence type="ECO:0000255" key="2">
    <source>
        <dbReference type="PROSITE-ProRule" id="PRU00042"/>
    </source>
</evidence>
<evidence type="ECO:0000256" key="3">
    <source>
        <dbReference type="SAM" id="MobiDB-lite"/>
    </source>
</evidence>
<evidence type="ECO:0000305" key="4"/>
<evidence type="ECO:0007744" key="5">
    <source>
    </source>
</evidence>
<evidence type="ECO:0007744" key="6">
    <source>
    </source>
</evidence>
<evidence type="ECO:0007744" key="7">
    <source>
    </source>
</evidence>
<evidence type="ECO:0007744" key="8">
    <source>
    </source>
</evidence>
<evidence type="ECO:0007744" key="9">
    <source>
    </source>
</evidence>
<evidence type="ECO:0007744" key="10">
    <source>
    </source>
</evidence>
<evidence type="ECO:0007744" key="11">
    <source>
    </source>
</evidence>
<evidence type="ECO:0007744" key="12">
    <source>
    </source>
</evidence>